<proteinExistence type="evidence at transcript level"/>
<sequence>MAAEADSWDADTFEVVEPVAKRLVPAGVAGDRWAGEDEEDDVKDNWDDEEEEEEVKEAEVKQEPKVSEKKKIAEKIKEKEKQQKKKQEELKKRLEAPEEHKELTPEEQLADKLRLKKLQEESDLELAKETFGVNNACGIDAMNPSSKDDFTEFGKLLKEKITQYEKSLHYASFLEALVRDVCISLEIDDLKKITNSLTVLCSEKQKQEKQSKAKKKKKGVVPGGGLKATMKDDLADYGGYDGEYVQEFEDFM</sequence>
<feature type="chain" id="PRO_0000365123" description="Eukaryotic translation initiation factor 3 subunit J">
    <location>
        <begin position="1"/>
        <end position="252"/>
    </location>
</feature>
<feature type="region of interest" description="Disordered" evidence="2">
    <location>
        <begin position="24"/>
        <end position="107"/>
    </location>
</feature>
<feature type="region of interest" description="Disordered" evidence="2">
    <location>
        <begin position="209"/>
        <end position="232"/>
    </location>
</feature>
<feature type="coiled-coil region" evidence="1">
    <location>
        <begin position="65"/>
        <end position="130"/>
    </location>
</feature>
<feature type="compositionally biased region" description="Acidic residues" evidence="2">
    <location>
        <begin position="36"/>
        <end position="56"/>
    </location>
</feature>
<feature type="compositionally biased region" description="Basic and acidic residues" evidence="2">
    <location>
        <begin position="57"/>
        <end position="107"/>
    </location>
</feature>
<name>EIF3J_CHICK</name>
<comment type="function">
    <text evidence="1">Component of the eukaryotic translation initiation factor 3 (eIF-3) complex, which is involved in protein synthesis of a specialized repertoire of mRNAs and, together with other initiation factors, stimulates binding of mRNA and methionyl-tRNAi to the 40S ribosome. The eIF-3 complex specifically targets and initiates translation of a subset of mRNAs involved in cell proliferation.</text>
</comment>
<comment type="subunit">
    <text evidence="1">Component of the eukaryotic translation initiation factor 3 (eIF-3) complex, which is composed of 13 subunits: EIF3A, EIF3B, EIF3C, EIF3D, EIF3E, EIF3F, EIF3G, EIF3H, EIF3I, EIF3J, EIF3K, EIF3L and EIF3M.</text>
</comment>
<comment type="subcellular location">
    <subcellularLocation>
        <location evidence="1">Cytoplasm</location>
    </subcellularLocation>
</comment>
<comment type="similarity">
    <text evidence="1">Belongs to the eIF-3 subunit J family.</text>
</comment>
<protein>
    <recommendedName>
        <fullName evidence="1">Eukaryotic translation initiation factor 3 subunit J</fullName>
        <shortName evidence="1">eIF3j</shortName>
    </recommendedName>
    <alternativeName>
        <fullName evidence="1">Eukaryotic translation initiation factor 3 subunit 1</fullName>
    </alternativeName>
    <alternativeName>
        <fullName evidence="1">eIF-3-alpha</fullName>
    </alternativeName>
    <alternativeName>
        <fullName evidence="1">eIF3 p35</fullName>
    </alternativeName>
</protein>
<reference key="1">
    <citation type="journal article" date="2005" name="Genome Biol.">
        <title>Full-length cDNAs from chicken bursal lymphocytes to facilitate gene function analysis.</title>
        <authorList>
            <person name="Caldwell R.B."/>
            <person name="Kierzek A.M."/>
            <person name="Arakawa H."/>
            <person name="Bezzubov Y."/>
            <person name="Zaim J."/>
            <person name="Fiedler P."/>
            <person name="Kutter S."/>
            <person name="Blagodatski A."/>
            <person name="Kostovska D."/>
            <person name="Koter M."/>
            <person name="Plachy J."/>
            <person name="Carninci P."/>
            <person name="Hayashizaki Y."/>
            <person name="Buerstedde J.-M."/>
        </authorList>
    </citation>
    <scope>NUCLEOTIDE SEQUENCE [LARGE SCALE MRNA]</scope>
    <source>
        <strain>CB</strain>
        <tissue>Bursa of Fabricius</tissue>
    </source>
</reference>
<dbReference type="EMBL" id="AJ720180">
    <property type="protein sequence ID" value="CAG31839.1"/>
    <property type="molecule type" value="mRNA"/>
</dbReference>
<dbReference type="RefSeq" id="NP_001012789.1">
    <property type="nucleotide sequence ID" value="NM_001012771.3"/>
</dbReference>
<dbReference type="SMR" id="Q5ZKA4"/>
<dbReference type="FunCoup" id="Q5ZKA4">
    <property type="interactions" value="1966"/>
</dbReference>
<dbReference type="STRING" id="9031.ENSGALP00000013321"/>
<dbReference type="PaxDb" id="9031-ENSGALP00000013321"/>
<dbReference type="Ensembl" id="ENSGALT00010039231.1">
    <property type="protein sequence ID" value="ENSGALP00010022644.1"/>
    <property type="gene ID" value="ENSGALG00010016304.1"/>
</dbReference>
<dbReference type="GeneID" id="415573"/>
<dbReference type="KEGG" id="gga:415573"/>
<dbReference type="CTD" id="8669"/>
<dbReference type="VEuPathDB" id="HostDB:geneid_415573"/>
<dbReference type="eggNOG" id="KOG4813">
    <property type="taxonomic scope" value="Eukaryota"/>
</dbReference>
<dbReference type="GeneTree" id="ENSGT00390000018400"/>
<dbReference type="HOGENOM" id="CLU_085806_2_1_1"/>
<dbReference type="InParanoid" id="Q5ZKA4"/>
<dbReference type="OMA" id="KPHYALW"/>
<dbReference type="OrthoDB" id="20381at2759"/>
<dbReference type="PhylomeDB" id="Q5ZKA4"/>
<dbReference type="Reactome" id="R-GGA-72649">
    <property type="pathway name" value="Translation initiation complex formation"/>
</dbReference>
<dbReference type="Reactome" id="R-GGA-72689">
    <property type="pathway name" value="Formation of a pool of free 40S subunits"/>
</dbReference>
<dbReference type="Reactome" id="R-GGA-72695">
    <property type="pathway name" value="Formation of the ternary complex, and subsequently, the 43S complex"/>
</dbReference>
<dbReference type="Reactome" id="R-GGA-72702">
    <property type="pathway name" value="Ribosomal scanning and start codon recognition"/>
</dbReference>
<dbReference type="PRO" id="PR:Q5ZKA4"/>
<dbReference type="Proteomes" id="UP000000539">
    <property type="component" value="Chromosome 10"/>
</dbReference>
<dbReference type="Bgee" id="ENSGALG00000008187">
    <property type="expression patterns" value="Expressed in muscle tissue and 13 other cell types or tissues"/>
</dbReference>
<dbReference type="GO" id="GO:0016282">
    <property type="term" value="C:eukaryotic 43S preinitiation complex"/>
    <property type="evidence" value="ECO:0007669"/>
    <property type="project" value="UniProtKB-UniRule"/>
</dbReference>
<dbReference type="GO" id="GO:0033290">
    <property type="term" value="C:eukaryotic 48S preinitiation complex"/>
    <property type="evidence" value="ECO:0007669"/>
    <property type="project" value="UniProtKB-UniRule"/>
</dbReference>
<dbReference type="GO" id="GO:0005852">
    <property type="term" value="C:eukaryotic translation initiation factor 3 complex"/>
    <property type="evidence" value="ECO:0000250"/>
    <property type="project" value="UniProtKB"/>
</dbReference>
<dbReference type="GO" id="GO:0003743">
    <property type="term" value="F:translation initiation factor activity"/>
    <property type="evidence" value="ECO:0007669"/>
    <property type="project" value="UniProtKB-UniRule"/>
</dbReference>
<dbReference type="GO" id="GO:0001732">
    <property type="term" value="P:formation of cytoplasmic translation initiation complex"/>
    <property type="evidence" value="ECO:0007669"/>
    <property type="project" value="UniProtKB-UniRule"/>
</dbReference>
<dbReference type="FunFam" id="1.10.246.60:FF:000001">
    <property type="entry name" value="Eukaryotic translation initiation factor 3 subunit J"/>
    <property type="match status" value="1"/>
</dbReference>
<dbReference type="Gene3D" id="1.10.246.60">
    <property type="entry name" value="Eukaryotic translation initiation factor 3 like domains"/>
    <property type="match status" value="1"/>
</dbReference>
<dbReference type="HAMAP" id="MF_03009">
    <property type="entry name" value="eIF3j"/>
    <property type="match status" value="1"/>
</dbReference>
<dbReference type="InterPro" id="IPR023194">
    <property type="entry name" value="eIF3-like_dom_sf"/>
</dbReference>
<dbReference type="InterPro" id="IPR013906">
    <property type="entry name" value="eIF3j"/>
</dbReference>
<dbReference type="PANTHER" id="PTHR21681">
    <property type="entry name" value="EUKARYOTIC TRANSLATION INITIATION FACTOR 3 SUBUNIT J"/>
    <property type="match status" value="1"/>
</dbReference>
<dbReference type="PANTHER" id="PTHR21681:SF0">
    <property type="entry name" value="EUKARYOTIC TRANSLATION INITIATION FACTOR 3 SUBUNIT J"/>
    <property type="match status" value="1"/>
</dbReference>
<dbReference type="Pfam" id="PF08597">
    <property type="entry name" value="eIF3_subunit"/>
    <property type="match status" value="1"/>
</dbReference>
<accession>Q5ZKA4</accession>
<keyword id="KW-0175">Coiled coil</keyword>
<keyword id="KW-0963">Cytoplasm</keyword>
<keyword id="KW-0396">Initiation factor</keyword>
<keyword id="KW-0648">Protein biosynthesis</keyword>
<keyword id="KW-1185">Reference proteome</keyword>
<gene>
    <name evidence="1" type="primary">EIF3J</name>
    <name evidence="1" type="synonym">EIF3S1</name>
    <name type="ORF">RCJMB04_12b11</name>
</gene>
<organism>
    <name type="scientific">Gallus gallus</name>
    <name type="common">Chicken</name>
    <dbReference type="NCBI Taxonomy" id="9031"/>
    <lineage>
        <taxon>Eukaryota</taxon>
        <taxon>Metazoa</taxon>
        <taxon>Chordata</taxon>
        <taxon>Craniata</taxon>
        <taxon>Vertebrata</taxon>
        <taxon>Euteleostomi</taxon>
        <taxon>Archelosauria</taxon>
        <taxon>Archosauria</taxon>
        <taxon>Dinosauria</taxon>
        <taxon>Saurischia</taxon>
        <taxon>Theropoda</taxon>
        <taxon>Coelurosauria</taxon>
        <taxon>Aves</taxon>
        <taxon>Neognathae</taxon>
        <taxon>Galloanserae</taxon>
        <taxon>Galliformes</taxon>
        <taxon>Phasianidae</taxon>
        <taxon>Phasianinae</taxon>
        <taxon>Gallus</taxon>
    </lineage>
</organism>
<evidence type="ECO:0000255" key="1">
    <source>
        <dbReference type="HAMAP-Rule" id="MF_03009"/>
    </source>
</evidence>
<evidence type="ECO:0000256" key="2">
    <source>
        <dbReference type="SAM" id="MobiDB-lite"/>
    </source>
</evidence>